<dbReference type="EC" id="3.4.24.-"/>
<dbReference type="EMBL" id="AAFI02000197">
    <property type="protein sequence ID" value="EAL60963.1"/>
    <property type="molecule type" value="Genomic_DNA"/>
</dbReference>
<dbReference type="RefSeq" id="XP_629369.1">
    <property type="nucleotide sequence ID" value="XM_629367.1"/>
</dbReference>
<dbReference type="FunCoup" id="Q54CP7">
    <property type="interactions" value="4"/>
</dbReference>
<dbReference type="PaxDb" id="44689-DDB0252838"/>
<dbReference type="EnsemblProtists" id="EAL60963">
    <property type="protein sequence ID" value="EAL60963"/>
    <property type="gene ID" value="DDB_G0292828"/>
</dbReference>
<dbReference type="GeneID" id="8628886"/>
<dbReference type="KEGG" id="ddi:DDB_G0292828"/>
<dbReference type="dictyBase" id="DDB_G0292828"/>
<dbReference type="VEuPathDB" id="AmoebaDB:DDB_G0292828"/>
<dbReference type="eggNOG" id="ENOG502SN3T">
    <property type="taxonomic scope" value="Eukaryota"/>
</dbReference>
<dbReference type="HOGENOM" id="CLU_451780_0_0_1"/>
<dbReference type="InParanoid" id="Q54CP7"/>
<dbReference type="PhylomeDB" id="Q54CP7"/>
<dbReference type="PRO" id="PR:Q54CP7"/>
<dbReference type="Proteomes" id="UP000002195">
    <property type="component" value="Chromosome 6"/>
</dbReference>
<dbReference type="GO" id="GO:0005576">
    <property type="term" value="C:extracellular region"/>
    <property type="evidence" value="ECO:0007669"/>
    <property type="project" value="UniProtKB-SubCell"/>
</dbReference>
<dbReference type="GO" id="GO:0046872">
    <property type="term" value="F:metal ion binding"/>
    <property type="evidence" value="ECO:0007669"/>
    <property type="project" value="UniProtKB-KW"/>
</dbReference>
<dbReference type="GO" id="GO:0004222">
    <property type="term" value="F:metalloendopeptidase activity"/>
    <property type="evidence" value="ECO:0007669"/>
    <property type="project" value="InterPro"/>
</dbReference>
<dbReference type="GO" id="GO:0006508">
    <property type="term" value="P:proteolysis"/>
    <property type="evidence" value="ECO:0007669"/>
    <property type="project" value="UniProtKB-KW"/>
</dbReference>
<dbReference type="Gene3D" id="3.40.390.10">
    <property type="entry name" value="Collagenase (Catalytic Domain)"/>
    <property type="match status" value="1"/>
</dbReference>
<dbReference type="InterPro" id="IPR051256">
    <property type="entry name" value="Dictomallein"/>
</dbReference>
<dbReference type="InterPro" id="IPR024079">
    <property type="entry name" value="MetalloPept_cat_dom_sf"/>
</dbReference>
<dbReference type="InterPro" id="IPR019503">
    <property type="entry name" value="Peptidase_M66_dom"/>
</dbReference>
<dbReference type="PANTHER" id="PTHR39540">
    <property type="match status" value="1"/>
</dbReference>
<dbReference type="PANTHER" id="PTHR39540:SF1">
    <property type="entry name" value="DICTOMALLEIN-1-RELATED"/>
    <property type="match status" value="1"/>
</dbReference>
<dbReference type="Pfam" id="PF10462">
    <property type="entry name" value="Peptidase_M66"/>
    <property type="match status" value="1"/>
</dbReference>
<dbReference type="SUPFAM" id="SSF55486">
    <property type="entry name" value="Metalloproteases ('zincins'), catalytic domain"/>
    <property type="match status" value="1"/>
</dbReference>
<dbReference type="PROSITE" id="PS51694">
    <property type="entry name" value="PEPTIDASE_M66"/>
    <property type="match status" value="1"/>
</dbReference>
<reference key="1">
    <citation type="journal article" date="2005" name="Nature">
        <title>The genome of the social amoeba Dictyostelium discoideum.</title>
        <authorList>
            <person name="Eichinger L."/>
            <person name="Pachebat J.A."/>
            <person name="Gloeckner G."/>
            <person name="Rajandream M.A."/>
            <person name="Sucgang R."/>
            <person name="Berriman M."/>
            <person name="Song J."/>
            <person name="Olsen R."/>
            <person name="Szafranski K."/>
            <person name="Xu Q."/>
            <person name="Tunggal B."/>
            <person name="Kummerfeld S."/>
            <person name="Madera M."/>
            <person name="Konfortov B.A."/>
            <person name="Rivero F."/>
            <person name="Bankier A.T."/>
            <person name="Lehmann R."/>
            <person name="Hamlin N."/>
            <person name="Davies R."/>
            <person name="Gaudet P."/>
            <person name="Fey P."/>
            <person name="Pilcher K."/>
            <person name="Chen G."/>
            <person name="Saunders D."/>
            <person name="Sodergren E.J."/>
            <person name="Davis P."/>
            <person name="Kerhornou A."/>
            <person name="Nie X."/>
            <person name="Hall N."/>
            <person name="Anjard C."/>
            <person name="Hemphill L."/>
            <person name="Bason N."/>
            <person name="Farbrother P."/>
            <person name="Desany B."/>
            <person name="Just E."/>
            <person name="Morio T."/>
            <person name="Rost R."/>
            <person name="Churcher C.M."/>
            <person name="Cooper J."/>
            <person name="Haydock S."/>
            <person name="van Driessche N."/>
            <person name="Cronin A."/>
            <person name="Goodhead I."/>
            <person name="Muzny D.M."/>
            <person name="Mourier T."/>
            <person name="Pain A."/>
            <person name="Lu M."/>
            <person name="Harper D."/>
            <person name="Lindsay R."/>
            <person name="Hauser H."/>
            <person name="James K.D."/>
            <person name="Quiles M."/>
            <person name="Madan Babu M."/>
            <person name="Saito T."/>
            <person name="Buchrieser C."/>
            <person name="Wardroper A."/>
            <person name="Felder M."/>
            <person name="Thangavelu M."/>
            <person name="Johnson D."/>
            <person name="Knights A."/>
            <person name="Loulseged H."/>
            <person name="Mungall K.L."/>
            <person name="Oliver K."/>
            <person name="Price C."/>
            <person name="Quail M.A."/>
            <person name="Urushihara H."/>
            <person name="Hernandez J."/>
            <person name="Rabbinowitsch E."/>
            <person name="Steffen D."/>
            <person name="Sanders M."/>
            <person name="Ma J."/>
            <person name="Kohara Y."/>
            <person name="Sharp S."/>
            <person name="Simmonds M.N."/>
            <person name="Spiegler S."/>
            <person name="Tivey A."/>
            <person name="Sugano S."/>
            <person name="White B."/>
            <person name="Walker D."/>
            <person name="Woodward J.R."/>
            <person name="Winckler T."/>
            <person name="Tanaka Y."/>
            <person name="Shaulsky G."/>
            <person name="Schleicher M."/>
            <person name="Weinstock G.M."/>
            <person name="Rosenthal A."/>
            <person name="Cox E.C."/>
            <person name="Chisholm R.L."/>
            <person name="Gibbs R.A."/>
            <person name="Loomis W.F."/>
            <person name="Platzer M."/>
            <person name="Kay R.R."/>
            <person name="Williams J.G."/>
            <person name="Dear P.H."/>
            <person name="Noegel A.A."/>
            <person name="Barrell B.G."/>
            <person name="Kuspa A."/>
        </authorList>
    </citation>
    <scope>NUCLEOTIDE SEQUENCE [LARGE SCALE GENOMIC DNA]</scope>
    <source>
        <strain>AX4</strain>
    </source>
</reference>
<name>DTML5_DICDI</name>
<protein>
    <recommendedName>
        <fullName>Dictomallein-5</fullName>
        <ecNumber>3.4.24.-</ecNumber>
    </recommendedName>
</protein>
<keyword id="KW-0378">Hydrolase</keyword>
<keyword id="KW-0479">Metal-binding</keyword>
<keyword id="KW-0482">Metalloprotease</keyword>
<keyword id="KW-0645">Protease</keyword>
<keyword id="KW-1185">Reference proteome</keyword>
<keyword id="KW-0964">Secreted</keyword>
<keyword id="KW-0732">Signal</keyword>
<keyword id="KW-0862">Zinc</keyword>
<comment type="cofactor">
    <cofactor evidence="3">
        <name>Zn(2+)</name>
        <dbReference type="ChEBI" id="CHEBI:29105"/>
    </cofactor>
    <text evidence="3">Binds 1 zinc ion per subunit.</text>
</comment>
<comment type="subcellular location">
    <subcellularLocation>
        <location evidence="3">Secreted</location>
    </subcellularLocation>
</comment>
<comment type="similarity">
    <text evidence="3">Belongs to the dictomallein family.</text>
</comment>
<accession>Q54CP7</accession>
<feature type="signal peptide" evidence="2">
    <location>
        <begin position="1"/>
        <end position="21"/>
    </location>
</feature>
<feature type="chain" id="PRO_0000322650" description="Dictomallein-5">
    <location>
        <begin position="22"/>
        <end position="623"/>
    </location>
</feature>
<feature type="domain" description="Peptidase M66">
    <location>
        <begin position="174"/>
        <end position="435"/>
    </location>
</feature>
<feature type="active site" evidence="1">
    <location>
        <position position="328"/>
    </location>
</feature>
<feature type="binding site" evidence="1">
    <location>
        <position position="327"/>
    </location>
    <ligand>
        <name>Zn(2+)</name>
        <dbReference type="ChEBI" id="CHEBI:29105"/>
        <note>catalytic</note>
    </ligand>
</feature>
<feature type="binding site" evidence="1">
    <location>
        <position position="331"/>
    </location>
    <ligand>
        <name>Zn(2+)</name>
        <dbReference type="ChEBI" id="CHEBI:29105"/>
        <note>catalytic</note>
    </ligand>
</feature>
<feature type="binding site" evidence="1">
    <location>
        <position position="337"/>
    </location>
    <ligand>
        <name>Zn(2+)</name>
        <dbReference type="ChEBI" id="CHEBI:29105"/>
        <note>catalytic</note>
    </ligand>
</feature>
<gene>
    <name type="primary">dtmlE</name>
    <name type="ORF">DDB_G0292828</name>
</gene>
<sequence length="623" mass="70749">MKIFIIKIILVLFNYVLLSYSINQDLNILNVYDVRFAQTHVIPIEGKSWILNNKTYTLTIVGNRDSLLLVKFIDISITGTSSIKTVTTKTTKEEIKATILTNTYNVMVWNNDIVMGTRLLNDPNQLPPTESNGEQYSNEHHSIMIPKEWVKPGMKLQFFENSNSFIKSSKFIFPNVGQDYTLKMWTLPFYLFGANDTNTRPFNQTKNIDDSISAGLSQVYSCSNILSLNHPIQRVDWPYLVLGPRNGLPGMLITNSDQKKDGYAIMEGVLNILTGIRVAFGESTSSIQIYAPLLHLGANGKYADTYGGLGGSSRGTGDYRYSDTFVHEQGHAMGLPHAGEAFASGSYPYVNGSLLGSEWGFDINHYEFLSITLSNTSKNYKGCEKKNVKDTQNRCVKQSVMQSGAGDRSSNYLFSMFSDFEMSIIQNYFKNSIYYDEQIGKYKKWNETIGSYYEYKPITKDYGFYRLDDGIPIERDIDVYTIVFTYSLVGPEPLSQIYPLLKSKGNLIRQFDPTNKTEMKLITPNTGSIPWYCFNSGCDYTIRVTYDDDSIKHILLQQGKRQYWKPMGDFKLNFNDPTSSDSFLLGVINVKAIKTIKKVELLETLMAWNGISKNSKLLTFKLF</sequence>
<proteinExistence type="inferred from homology"/>
<evidence type="ECO:0000250" key="1"/>
<evidence type="ECO:0000255" key="2"/>
<evidence type="ECO:0000305" key="3"/>
<organism>
    <name type="scientific">Dictyostelium discoideum</name>
    <name type="common">Social amoeba</name>
    <dbReference type="NCBI Taxonomy" id="44689"/>
    <lineage>
        <taxon>Eukaryota</taxon>
        <taxon>Amoebozoa</taxon>
        <taxon>Evosea</taxon>
        <taxon>Eumycetozoa</taxon>
        <taxon>Dictyostelia</taxon>
        <taxon>Dictyosteliales</taxon>
        <taxon>Dictyosteliaceae</taxon>
        <taxon>Dictyostelium</taxon>
    </lineage>
</organism>